<evidence type="ECO:0000255" key="1">
    <source>
        <dbReference type="HAMAP-Rule" id="MF_00318"/>
    </source>
</evidence>
<dbReference type="EC" id="4.2.1.11" evidence="1"/>
<dbReference type="EMBL" id="CP000510">
    <property type="protein sequence ID" value="ABM02522.1"/>
    <property type="molecule type" value="Genomic_DNA"/>
</dbReference>
<dbReference type="RefSeq" id="WP_011769081.1">
    <property type="nucleotide sequence ID" value="NC_008709.1"/>
</dbReference>
<dbReference type="SMR" id="A1SSQ7"/>
<dbReference type="STRING" id="357804.Ping_0669"/>
<dbReference type="KEGG" id="pin:Ping_0669"/>
<dbReference type="eggNOG" id="COG0148">
    <property type="taxonomic scope" value="Bacteria"/>
</dbReference>
<dbReference type="HOGENOM" id="CLU_031223_2_1_6"/>
<dbReference type="OrthoDB" id="9804716at2"/>
<dbReference type="UniPathway" id="UPA00109">
    <property type="reaction ID" value="UER00187"/>
</dbReference>
<dbReference type="Proteomes" id="UP000000639">
    <property type="component" value="Chromosome"/>
</dbReference>
<dbReference type="GO" id="GO:0009986">
    <property type="term" value="C:cell surface"/>
    <property type="evidence" value="ECO:0007669"/>
    <property type="project" value="UniProtKB-SubCell"/>
</dbReference>
<dbReference type="GO" id="GO:0005576">
    <property type="term" value="C:extracellular region"/>
    <property type="evidence" value="ECO:0007669"/>
    <property type="project" value="UniProtKB-SubCell"/>
</dbReference>
<dbReference type="GO" id="GO:0000015">
    <property type="term" value="C:phosphopyruvate hydratase complex"/>
    <property type="evidence" value="ECO:0007669"/>
    <property type="project" value="InterPro"/>
</dbReference>
<dbReference type="GO" id="GO:0000287">
    <property type="term" value="F:magnesium ion binding"/>
    <property type="evidence" value="ECO:0007669"/>
    <property type="project" value="UniProtKB-UniRule"/>
</dbReference>
<dbReference type="GO" id="GO:0004634">
    <property type="term" value="F:phosphopyruvate hydratase activity"/>
    <property type="evidence" value="ECO:0007669"/>
    <property type="project" value="UniProtKB-UniRule"/>
</dbReference>
<dbReference type="GO" id="GO:0006096">
    <property type="term" value="P:glycolytic process"/>
    <property type="evidence" value="ECO:0007669"/>
    <property type="project" value="UniProtKB-UniRule"/>
</dbReference>
<dbReference type="CDD" id="cd03313">
    <property type="entry name" value="enolase"/>
    <property type="match status" value="1"/>
</dbReference>
<dbReference type="FunFam" id="3.20.20.120:FF:000001">
    <property type="entry name" value="Enolase"/>
    <property type="match status" value="1"/>
</dbReference>
<dbReference type="FunFam" id="3.30.390.10:FF:000001">
    <property type="entry name" value="Enolase"/>
    <property type="match status" value="1"/>
</dbReference>
<dbReference type="Gene3D" id="3.20.20.120">
    <property type="entry name" value="Enolase-like C-terminal domain"/>
    <property type="match status" value="1"/>
</dbReference>
<dbReference type="Gene3D" id="3.30.390.10">
    <property type="entry name" value="Enolase-like, N-terminal domain"/>
    <property type="match status" value="1"/>
</dbReference>
<dbReference type="HAMAP" id="MF_00318">
    <property type="entry name" value="Enolase"/>
    <property type="match status" value="1"/>
</dbReference>
<dbReference type="InterPro" id="IPR000941">
    <property type="entry name" value="Enolase"/>
</dbReference>
<dbReference type="InterPro" id="IPR036849">
    <property type="entry name" value="Enolase-like_C_sf"/>
</dbReference>
<dbReference type="InterPro" id="IPR029017">
    <property type="entry name" value="Enolase-like_N"/>
</dbReference>
<dbReference type="InterPro" id="IPR020810">
    <property type="entry name" value="Enolase_C"/>
</dbReference>
<dbReference type="InterPro" id="IPR020809">
    <property type="entry name" value="Enolase_CS"/>
</dbReference>
<dbReference type="InterPro" id="IPR020811">
    <property type="entry name" value="Enolase_N"/>
</dbReference>
<dbReference type="NCBIfam" id="TIGR01060">
    <property type="entry name" value="eno"/>
    <property type="match status" value="1"/>
</dbReference>
<dbReference type="PANTHER" id="PTHR11902">
    <property type="entry name" value="ENOLASE"/>
    <property type="match status" value="1"/>
</dbReference>
<dbReference type="PANTHER" id="PTHR11902:SF1">
    <property type="entry name" value="ENOLASE"/>
    <property type="match status" value="1"/>
</dbReference>
<dbReference type="Pfam" id="PF00113">
    <property type="entry name" value="Enolase_C"/>
    <property type="match status" value="1"/>
</dbReference>
<dbReference type="Pfam" id="PF03952">
    <property type="entry name" value="Enolase_N"/>
    <property type="match status" value="1"/>
</dbReference>
<dbReference type="PIRSF" id="PIRSF001400">
    <property type="entry name" value="Enolase"/>
    <property type="match status" value="1"/>
</dbReference>
<dbReference type="PRINTS" id="PR00148">
    <property type="entry name" value="ENOLASE"/>
</dbReference>
<dbReference type="SFLD" id="SFLDS00001">
    <property type="entry name" value="Enolase"/>
    <property type="match status" value="1"/>
</dbReference>
<dbReference type="SFLD" id="SFLDF00002">
    <property type="entry name" value="enolase"/>
    <property type="match status" value="1"/>
</dbReference>
<dbReference type="SMART" id="SM01192">
    <property type="entry name" value="Enolase_C"/>
    <property type="match status" value="1"/>
</dbReference>
<dbReference type="SMART" id="SM01193">
    <property type="entry name" value="Enolase_N"/>
    <property type="match status" value="1"/>
</dbReference>
<dbReference type="SUPFAM" id="SSF51604">
    <property type="entry name" value="Enolase C-terminal domain-like"/>
    <property type="match status" value="1"/>
</dbReference>
<dbReference type="SUPFAM" id="SSF54826">
    <property type="entry name" value="Enolase N-terminal domain-like"/>
    <property type="match status" value="1"/>
</dbReference>
<dbReference type="PROSITE" id="PS00164">
    <property type="entry name" value="ENOLASE"/>
    <property type="match status" value="1"/>
</dbReference>
<feature type="chain" id="PRO_1000019240" description="Enolase">
    <location>
        <begin position="1"/>
        <end position="435"/>
    </location>
</feature>
<feature type="active site" description="Proton donor" evidence="1">
    <location>
        <position position="209"/>
    </location>
</feature>
<feature type="active site" description="Proton acceptor" evidence="1">
    <location>
        <position position="343"/>
    </location>
</feature>
<feature type="binding site" evidence="1">
    <location>
        <position position="167"/>
    </location>
    <ligand>
        <name>(2R)-2-phosphoglycerate</name>
        <dbReference type="ChEBI" id="CHEBI:58289"/>
    </ligand>
</feature>
<feature type="binding site" evidence="1">
    <location>
        <position position="246"/>
    </location>
    <ligand>
        <name>Mg(2+)</name>
        <dbReference type="ChEBI" id="CHEBI:18420"/>
    </ligand>
</feature>
<feature type="binding site" evidence="1">
    <location>
        <position position="291"/>
    </location>
    <ligand>
        <name>Mg(2+)</name>
        <dbReference type="ChEBI" id="CHEBI:18420"/>
    </ligand>
</feature>
<feature type="binding site" evidence="1">
    <location>
        <position position="318"/>
    </location>
    <ligand>
        <name>Mg(2+)</name>
        <dbReference type="ChEBI" id="CHEBI:18420"/>
    </ligand>
</feature>
<feature type="binding site" evidence="1">
    <location>
        <position position="343"/>
    </location>
    <ligand>
        <name>(2R)-2-phosphoglycerate</name>
        <dbReference type="ChEBI" id="CHEBI:58289"/>
    </ligand>
</feature>
<feature type="binding site" evidence="1">
    <location>
        <position position="372"/>
    </location>
    <ligand>
        <name>(2R)-2-phosphoglycerate</name>
        <dbReference type="ChEBI" id="CHEBI:58289"/>
    </ligand>
</feature>
<feature type="binding site" evidence="1">
    <location>
        <position position="373"/>
    </location>
    <ligand>
        <name>(2R)-2-phosphoglycerate</name>
        <dbReference type="ChEBI" id="CHEBI:58289"/>
    </ligand>
</feature>
<feature type="binding site" evidence="1">
    <location>
        <position position="394"/>
    </location>
    <ligand>
        <name>(2R)-2-phosphoglycerate</name>
        <dbReference type="ChEBI" id="CHEBI:58289"/>
    </ligand>
</feature>
<name>ENO_PSYIN</name>
<gene>
    <name evidence="1" type="primary">eno</name>
    <name type="ordered locus">Ping_0669</name>
</gene>
<reference key="1">
    <citation type="journal article" date="2008" name="BMC Genomics">
        <title>Genomics of an extreme psychrophile, Psychromonas ingrahamii.</title>
        <authorList>
            <person name="Riley M."/>
            <person name="Staley J.T."/>
            <person name="Danchin A."/>
            <person name="Wang T.Z."/>
            <person name="Brettin T.S."/>
            <person name="Hauser L.J."/>
            <person name="Land M.L."/>
            <person name="Thompson L.S."/>
        </authorList>
    </citation>
    <scope>NUCLEOTIDE SEQUENCE [LARGE SCALE GENOMIC DNA]</scope>
    <source>
        <strain>DSM 17664 / CCUG 51855 / 37</strain>
    </source>
</reference>
<sequence length="435" mass="45965">MSTIVKVLGREIMDSRGNPTVEAEVHLADGSIGMAAAPSGASTGSREALELRDGDKARYLGKGVLKAVTAVNGPIAEALIGKDAVKQAELDQIMIDLDGTENKAKFGANAILAVSLAAAKAAAVSKKVPLYAHIADLNGTPGVYSMPLPMMNIINGGEHADNSVDIQEFMIQPVGASTFREGLRMGAEVFHSLAKVLKADGHSTAVGDEGGFAPNLESNAAALAAIKVAVANAGYELGKDITLAMDCAASEFYNKETGMYELKGEGKTFTAKEFNYFLEDLVNQYPIVSIEDGLDESDWDGFKHQTELLGDKIQLVGDDLFVTNTKILARGIKEGITNSILIKFNQIGSLTETLAAIKMAKDAGFTAVISHRSGETEDSTIADLAVGTAAGQIKTGSLSRSDRVAKYNQLLRIEEALGSKAPYNGLKEVKGTFNF</sequence>
<organism>
    <name type="scientific">Psychromonas ingrahamii (strain DSM 17664 / CCUG 51855 / 37)</name>
    <dbReference type="NCBI Taxonomy" id="357804"/>
    <lineage>
        <taxon>Bacteria</taxon>
        <taxon>Pseudomonadati</taxon>
        <taxon>Pseudomonadota</taxon>
        <taxon>Gammaproteobacteria</taxon>
        <taxon>Alteromonadales</taxon>
        <taxon>Psychromonadaceae</taxon>
        <taxon>Psychromonas</taxon>
    </lineage>
</organism>
<protein>
    <recommendedName>
        <fullName evidence="1">Enolase</fullName>
        <ecNumber evidence="1">4.2.1.11</ecNumber>
    </recommendedName>
    <alternativeName>
        <fullName evidence="1">2-phospho-D-glycerate hydro-lyase</fullName>
    </alternativeName>
    <alternativeName>
        <fullName evidence="1">2-phosphoglycerate dehydratase</fullName>
    </alternativeName>
</protein>
<proteinExistence type="inferred from homology"/>
<accession>A1SSQ7</accession>
<keyword id="KW-0963">Cytoplasm</keyword>
<keyword id="KW-0324">Glycolysis</keyword>
<keyword id="KW-0456">Lyase</keyword>
<keyword id="KW-0460">Magnesium</keyword>
<keyword id="KW-0479">Metal-binding</keyword>
<keyword id="KW-1185">Reference proteome</keyword>
<keyword id="KW-0964">Secreted</keyword>
<comment type="function">
    <text evidence="1">Catalyzes the reversible conversion of 2-phosphoglycerate (2-PG) into phosphoenolpyruvate (PEP). It is essential for the degradation of carbohydrates via glycolysis.</text>
</comment>
<comment type="catalytic activity">
    <reaction evidence="1">
        <text>(2R)-2-phosphoglycerate = phosphoenolpyruvate + H2O</text>
        <dbReference type="Rhea" id="RHEA:10164"/>
        <dbReference type="ChEBI" id="CHEBI:15377"/>
        <dbReference type="ChEBI" id="CHEBI:58289"/>
        <dbReference type="ChEBI" id="CHEBI:58702"/>
        <dbReference type="EC" id="4.2.1.11"/>
    </reaction>
</comment>
<comment type="cofactor">
    <cofactor evidence="1">
        <name>Mg(2+)</name>
        <dbReference type="ChEBI" id="CHEBI:18420"/>
    </cofactor>
    <text evidence="1">Binds a second Mg(2+) ion via substrate during catalysis.</text>
</comment>
<comment type="pathway">
    <text evidence="1">Carbohydrate degradation; glycolysis; pyruvate from D-glyceraldehyde 3-phosphate: step 4/5.</text>
</comment>
<comment type="subunit">
    <text evidence="1">Component of the RNA degradosome, a multiprotein complex involved in RNA processing and mRNA degradation.</text>
</comment>
<comment type="subcellular location">
    <subcellularLocation>
        <location evidence="1">Cytoplasm</location>
    </subcellularLocation>
    <subcellularLocation>
        <location evidence="1">Secreted</location>
    </subcellularLocation>
    <subcellularLocation>
        <location evidence="1">Cell surface</location>
    </subcellularLocation>
    <text evidence="1">Fractions of enolase are present in both the cytoplasm and on the cell surface.</text>
</comment>
<comment type="similarity">
    <text evidence="1">Belongs to the enolase family.</text>
</comment>